<feature type="chain" id="PRO_0000293335" description="Small ribosomal subunit protein uS4">
    <location>
        <begin position="1"/>
        <end position="202"/>
    </location>
</feature>
<feature type="domain" description="S4 RNA-binding" evidence="1">
    <location>
        <begin position="90"/>
        <end position="152"/>
    </location>
</feature>
<feature type="region of interest" description="Disordered" evidence="2">
    <location>
        <begin position="1"/>
        <end position="42"/>
    </location>
</feature>
<feature type="compositionally biased region" description="Basic residues" evidence="2">
    <location>
        <begin position="1"/>
        <end position="13"/>
    </location>
</feature>
<name>RS4_PROMS</name>
<comment type="function">
    <text evidence="1">One of the primary rRNA binding proteins, it binds directly to 16S rRNA where it nucleates assembly of the body of the 30S subunit.</text>
</comment>
<comment type="function">
    <text evidence="1">With S5 and S12 plays an important role in translational accuracy.</text>
</comment>
<comment type="subunit">
    <text evidence="1">Part of the 30S ribosomal subunit. Contacts protein S5. The interaction surface between S4 and S5 is involved in control of translational fidelity.</text>
</comment>
<comment type="similarity">
    <text evidence="1">Belongs to the universal ribosomal protein uS4 family.</text>
</comment>
<sequence>MSRYRGPRLRVTRRLGELPGLTRKASKKSNPPGQHGQARRKRSEYAIRLEEKQKLRFNYGVSEKQLVRYVKKARAQEGSTGTNLLRLLENRLDNVCFRLGFGGTIPGSRQLVNHGHVTVNGKVLDIAGYQCKSGDVIGIKENKASKKLVEGNIEFPGLANVPPHLDLDKPKLTGKINGKCDREWVALEINELLVVEYYSRKV</sequence>
<dbReference type="EMBL" id="CP000551">
    <property type="protein sequence ID" value="ABM69748.1"/>
    <property type="molecule type" value="Genomic_DNA"/>
</dbReference>
<dbReference type="RefSeq" id="WP_011817920.1">
    <property type="nucleotide sequence ID" value="NC_008816.1"/>
</dbReference>
<dbReference type="SMR" id="A2BPN7"/>
<dbReference type="STRING" id="146891.A9601_04601"/>
<dbReference type="KEGG" id="pmb:A9601_04601"/>
<dbReference type="eggNOG" id="COG0522">
    <property type="taxonomic scope" value="Bacteria"/>
</dbReference>
<dbReference type="HOGENOM" id="CLU_092403_0_5_3"/>
<dbReference type="OrthoDB" id="9803672at2"/>
<dbReference type="Proteomes" id="UP000002590">
    <property type="component" value="Chromosome"/>
</dbReference>
<dbReference type="GO" id="GO:0015935">
    <property type="term" value="C:small ribosomal subunit"/>
    <property type="evidence" value="ECO:0007669"/>
    <property type="project" value="InterPro"/>
</dbReference>
<dbReference type="GO" id="GO:0019843">
    <property type="term" value="F:rRNA binding"/>
    <property type="evidence" value="ECO:0007669"/>
    <property type="project" value="UniProtKB-UniRule"/>
</dbReference>
<dbReference type="GO" id="GO:0003735">
    <property type="term" value="F:structural constituent of ribosome"/>
    <property type="evidence" value="ECO:0007669"/>
    <property type="project" value="InterPro"/>
</dbReference>
<dbReference type="GO" id="GO:0042274">
    <property type="term" value="P:ribosomal small subunit biogenesis"/>
    <property type="evidence" value="ECO:0007669"/>
    <property type="project" value="TreeGrafter"/>
</dbReference>
<dbReference type="GO" id="GO:0006412">
    <property type="term" value="P:translation"/>
    <property type="evidence" value="ECO:0007669"/>
    <property type="project" value="UniProtKB-UniRule"/>
</dbReference>
<dbReference type="CDD" id="cd00165">
    <property type="entry name" value="S4"/>
    <property type="match status" value="1"/>
</dbReference>
<dbReference type="FunFam" id="3.10.290.10:FF:000001">
    <property type="entry name" value="30S ribosomal protein S4"/>
    <property type="match status" value="1"/>
</dbReference>
<dbReference type="FunFam" id="1.10.1050.10:FF:000002">
    <property type="entry name" value="30S ribosomal protein S4, chloroplastic"/>
    <property type="match status" value="1"/>
</dbReference>
<dbReference type="Gene3D" id="1.10.1050.10">
    <property type="entry name" value="Ribosomal Protein S4 Delta 41, Chain A, domain 1"/>
    <property type="match status" value="1"/>
</dbReference>
<dbReference type="Gene3D" id="3.10.290.10">
    <property type="entry name" value="RNA-binding S4 domain"/>
    <property type="match status" value="1"/>
</dbReference>
<dbReference type="HAMAP" id="MF_01306_B">
    <property type="entry name" value="Ribosomal_uS4_B"/>
    <property type="match status" value="1"/>
</dbReference>
<dbReference type="InterPro" id="IPR022801">
    <property type="entry name" value="Ribosomal_uS4"/>
</dbReference>
<dbReference type="InterPro" id="IPR005709">
    <property type="entry name" value="Ribosomal_uS4_bac-type"/>
</dbReference>
<dbReference type="InterPro" id="IPR018079">
    <property type="entry name" value="Ribosomal_uS4_CS"/>
</dbReference>
<dbReference type="InterPro" id="IPR001912">
    <property type="entry name" value="Ribosomal_uS4_N"/>
</dbReference>
<dbReference type="InterPro" id="IPR002942">
    <property type="entry name" value="S4_RNA-bd"/>
</dbReference>
<dbReference type="InterPro" id="IPR036986">
    <property type="entry name" value="S4_RNA-bd_sf"/>
</dbReference>
<dbReference type="NCBIfam" id="NF003717">
    <property type="entry name" value="PRK05327.1"/>
    <property type="match status" value="1"/>
</dbReference>
<dbReference type="NCBIfam" id="TIGR01017">
    <property type="entry name" value="rpsD_bact"/>
    <property type="match status" value="1"/>
</dbReference>
<dbReference type="PANTHER" id="PTHR11831">
    <property type="entry name" value="30S 40S RIBOSOMAL PROTEIN"/>
    <property type="match status" value="1"/>
</dbReference>
<dbReference type="PANTHER" id="PTHR11831:SF4">
    <property type="entry name" value="SMALL RIBOSOMAL SUBUNIT PROTEIN US4M"/>
    <property type="match status" value="1"/>
</dbReference>
<dbReference type="Pfam" id="PF00163">
    <property type="entry name" value="Ribosomal_S4"/>
    <property type="match status" value="1"/>
</dbReference>
<dbReference type="Pfam" id="PF01479">
    <property type="entry name" value="S4"/>
    <property type="match status" value="1"/>
</dbReference>
<dbReference type="SMART" id="SM01390">
    <property type="entry name" value="Ribosomal_S4"/>
    <property type="match status" value="1"/>
</dbReference>
<dbReference type="SMART" id="SM00363">
    <property type="entry name" value="S4"/>
    <property type="match status" value="1"/>
</dbReference>
<dbReference type="SUPFAM" id="SSF55174">
    <property type="entry name" value="Alpha-L RNA-binding motif"/>
    <property type="match status" value="1"/>
</dbReference>
<dbReference type="PROSITE" id="PS00632">
    <property type="entry name" value="RIBOSOMAL_S4"/>
    <property type="match status" value="1"/>
</dbReference>
<dbReference type="PROSITE" id="PS50889">
    <property type="entry name" value="S4"/>
    <property type="match status" value="1"/>
</dbReference>
<proteinExistence type="inferred from homology"/>
<protein>
    <recommendedName>
        <fullName evidence="1">Small ribosomal subunit protein uS4</fullName>
    </recommendedName>
    <alternativeName>
        <fullName evidence="3">30S ribosomal protein S4</fullName>
    </alternativeName>
</protein>
<reference key="1">
    <citation type="journal article" date="2007" name="PLoS Genet.">
        <title>Patterns and implications of gene gain and loss in the evolution of Prochlorococcus.</title>
        <authorList>
            <person name="Kettler G.C."/>
            <person name="Martiny A.C."/>
            <person name="Huang K."/>
            <person name="Zucker J."/>
            <person name="Coleman M.L."/>
            <person name="Rodrigue S."/>
            <person name="Chen F."/>
            <person name="Lapidus A."/>
            <person name="Ferriera S."/>
            <person name="Johnson J."/>
            <person name="Steglich C."/>
            <person name="Church G.M."/>
            <person name="Richardson P."/>
            <person name="Chisholm S.W."/>
        </authorList>
    </citation>
    <scope>NUCLEOTIDE SEQUENCE [LARGE SCALE GENOMIC DNA]</scope>
    <source>
        <strain>AS9601</strain>
    </source>
</reference>
<accession>A2BPN7</accession>
<organism>
    <name type="scientific">Prochlorococcus marinus (strain AS9601)</name>
    <dbReference type="NCBI Taxonomy" id="146891"/>
    <lineage>
        <taxon>Bacteria</taxon>
        <taxon>Bacillati</taxon>
        <taxon>Cyanobacteriota</taxon>
        <taxon>Cyanophyceae</taxon>
        <taxon>Synechococcales</taxon>
        <taxon>Prochlorococcaceae</taxon>
        <taxon>Prochlorococcus</taxon>
    </lineage>
</organism>
<gene>
    <name evidence="1" type="primary">rpsD</name>
    <name evidence="1" type="synonym">rps4</name>
    <name type="ordered locus">A9601_04601</name>
</gene>
<evidence type="ECO:0000255" key="1">
    <source>
        <dbReference type="HAMAP-Rule" id="MF_01306"/>
    </source>
</evidence>
<evidence type="ECO:0000256" key="2">
    <source>
        <dbReference type="SAM" id="MobiDB-lite"/>
    </source>
</evidence>
<evidence type="ECO:0000305" key="3"/>
<keyword id="KW-0687">Ribonucleoprotein</keyword>
<keyword id="KW-0689">Ribosomal protein</keyword>
<keyword id="KW-0694">RNA-binding</keyword>
<keyword id="KW-0699">rRNA-binding</keyword>